<sequence>MSFSRSAADAADTLPDLAATLGAPALGAFVTLGDAFHTRLPAAPLPAPYVVGFSDEVAQLLGLPASFAAQPGFAELFAGNPTRDWPAHALPYASVYSGHQFGVWAGQLGDGRALTIGELPGTDGRRYELQIKGGGRTPYSRMGDGRAVLRSSIREFLCSEAMHHLGIPTTRALTVIGSDQPVVREEIETSAVVTRVSESFVRFGHFEHFFSNDRPDLLRQLADHVIDRFYPACRDADDPYLALLEAAMLRTADLVAQWQAVGFCHGVMNTDNMSILGLTIDYGPFGFVDAFDANHICNHSDTSGRYAYRMQPRIAHWNCYCLAQALLPLIGLQHGIADDDARAERAVDDAQAVLAKFPERFGPALERAMRAKLGLELERENDAELANKLLETMHASHADFTLTFRRLAQLSKHDASRDAPVRDLFIDRDAFDAWANLYRARLSEETRDDAARAAAMNRVNPKYVLRNHLAEVAIRRAKEKDFSEVERLAQVLRRPFDEQPEHEAYAALPPDWAGSLEVSCSS</sequence>
<keyword id="KW-0067">ATP-binding</keyword>
<keyword id="KW-0460">Magnesium</keyword>
<keyword id="KW-0464">Manganese</keyword>
<keyword id="KW-0479">Metal-binding</keyword>
<keyword id="KW-0547">Nucleotide-binding</keyword>
<keyword id="KW-0548">Nucleotidyltransferase</keyword>
<keyword id="KW-0808">Transferase</keyword>
<name>SELO_BURA4</name>
<protein>
    <recommendedName>
        <fullName evidence="1">Protein nucleotidyltransferase YdiU</fullName>
        <ecNumber evidence="1">2.7.7.-</ecNumber>
    </recommendedName>
    <alternativeName>
        <fullName evidence="1">Protein adenylyltransferase YdiU</fullName>
        <ecNumber evidence="1">2.7.7.108</ecNumber>
    </alternativeName>
    <alternativeName>
        <fullName evidence="1">Protein uridylyltransferase YdiU</fullName>
        <ecNumber evidence="1">2.7.7.-</ecNumber>
    </alternativeName>
</protein>
<feature type="chain" id="PRO_1000132092" description="Protein nucleotidyltransferase YdiU">
    <location>
        <begin position="1"/>
        <end position="522"/>
    </location>
</feature>
<feature type="active site" description="Proton acceptor" evidence="1">
    <location>
        <position position="271"/>
    </location>
</feature>
<feature type="binding site" evidence="1">
    <location>
        <position position="109"/>
    </location>
    <ligand>
        <name>ATP</name>
        <dbReference type="ChEBI" id="CHEBI:30616"/>
    </ligand>
</feature>
<feature type="binding site" evidence="1">
    <location>
        <position position="111"/>
    </location>
    <ligand>
        <name>ATP</name>
        <dbReference type="ChEBI" id="CHEBI:30616"/>
    </ligand>
</feature>
<feature type="binding site" evidence="1">
    <location>
        <position position="112"/>
    </location>
    <ligand>
        <name>ATP</name>
        <dbReference type="ChEBI" id="CHEBI:30616"/>
    </ligand>
</feature>
<feature type="binding site" evidence="1">
    <location>
        <position position="132"/>
    </location>
    <ligand>
        <name>ATP</name>
        <dbReference type="ChEBI" id="CHEBI:30616"/>
    </ligand>
</feature>
<feature type="binding site" evidence="1">
    <location>
        <position position="144"/>
    </location>
    <ligand>
        <name>ATP</name>
        <dbReference type="ChEBI" id="CHEBI:30616"/>
    </ligand>
</feature>
<feature type="binding site" evidence="1">
    <location>
        <position position="145"/>
    </location>
    <ligand>
        <name>ATP</name>
        <dbReference type="ChEBI" id="CHEBI:30616"/>
    </ligand>
</feature>
<feature type="binding site" evidence="1">
    <location>
        <position position="195"/>
    </location>
    <ligand>
        <name>ATP</name>
        <dbReference type="ChEBI" id="CHEBI:30616"/>
    </ligand>
</feature>
<feature type="binding site" evidence="1">
    <location>
        <position position="202"/>
    </location>
    <ligand>
        <name>ATP</name>
        <dbReference type="ChEBI" id="CHEBI:30616"/>
    </ligand>
</feature>
<feature type="binding site" evidence="1">
    <location>
        <position position="272"/>
    </location>
    <ligand>
        <name>Mg(2+)</name>
        <dbReference type="ChEBI" id="CHEBI:18420"/>
    </ligand>
</feature>
<feature type="binding site" evidence="1">
    <location>
        <position position="281"/>
    </location>
    <ligand>
        <name>ATP</name>
        <dbReference type="ChEBI" id="CHEBI:30616"/>
    </ligand>
</feature>
<feature type="binding site" evidence="1">
    <location>
        <position position="281"/>
    </location>
    <ligand>
        <name>Mg(2+)</name>
        <dbReference type="ChEBI" id="CHEBI:18420"/>
    </ligand>
</feature>
<reference key="1">
    <citation type="submission" date="2008-04" db="EMBL/GenBank/DDBJ databases">
        <title>Complete sequence of chromosome 1 of Burkholderia ambifaria MC40-6.</title>
        <authorList>
            <person name="Copeland A."/>
            <person name="Lucas S."/>
            <person name="Lapidus A."/>
            <person name="Glavina del Rio T."/>
            <person name="Dalin E."/>
            <person name="Tice H."/>
            <person name="Pitluck S."/>
            <person name="Chain P."/>
            <person name="Malfatti S."/>
            <person name="Shin M."/>
            <person name="Vergez L."/>
            <person name="Lang D."/>
            <person name="Schmutz J."/>
            <person name="Larimer F."/>
            <person name="Land M."/>
            <person name="Hauser L."/>
            <person name="Kyrpides N."/>
            <person name="Lykidis A."/>
            <person name="Ramette A."/>
            <person name="Konstantinidis K."/>
            <person name="Tiedje J."/>
            <person name="Richardson P."/>
        </authorList>
    </citation>
    <scope>NUCLEOTIDE SEQUENCE [LARGE SCALE GENOMIC DNA]</scope>
    <source>
        <strain>MC40-6</strain>
    </source>
</reference>
<dbReference type="EC" id="2.7.7.-" evidence="1"/>
<dbReference type="EC" id="2.7.7.108" evidence="1"/>
<dbReference type="EMBL" id="CP001025">
    <property type="protein sequence ID" value="ACB64309.1"/>
    <property type="molecule type" value="Genomic_DNA"/>
</dbReference>
<dbReference type="RefSeq" id="WP_012364066.1">
    <property type="nucleotide sequence ID" value="NC_010551.1"/>
</dbReference>
<dbReference type="SMR" id="B1YRN5"/>
<dbReference type="KEGG" id="bac:BamMC406_1826"/>
<dbReference type="HOGENOM" id="CLU_010245_4_0_4"/>
<dbReference type="OrthoDB" id="9776281at2"/>
<dbReference type="Proteomes" id="UP000001680">
    <property type="component" value="Chromosome 1"/>
</dbReference>
<dbReference type="GO" id="GO:0070733">
    <property type="term" value="F:AMPylase activity"/>
    <property type="evidence" value="ECO:0007669"/>
    <property type="project" value="TreeGrafter"/>
</dbReference>
<dbReference type="GO" id="GO:0005524">
    <property type="term" value="F:ATP binding"/>
    <property type="evidence" value="ECO:0007669"/>
    <property type="project" value="UniProtKB-UniRule"/>
</dbReference>
<dbReference type="GO" id="GO:0000287">
    <property type="term" value="F:magnesium ion binding"/>
    <property type="evidence" value="ECO:0007669"/>
    <property type="project" value="UniProtKB-UniRule"/>
</dbReference>
<dbReference type="HAMAP" id="MF_00692">
    <property type="entry name" value="YdiU_SelO"/>
    <property type="match status" value="1"/>
</dbReference>
<dbReference type="InterPro" id="IPR003846">
    <property type="entry name" value="SelO"/>
</dbReference>
<dbReference type="NCBIfam" id="NF000658">
    <property type="entry name" value="PRK00029.1"/>
    <property type="match status" value="1"/>
</dbReference>
<dbReference type="PANTHER" id="PTHR32057">
    <property type="entry name" value="PROTEIN ADENYLYLTRANSFERASE SELO, MITOCHONDRIAL"/>
    <property type="match status" value="1"/>
</dbReference>
<dbReference type="PANTHER" id="PTHR32057:SF14">
    <property type="entry name" value="PROTEIN ADENYLYLTRANSFERASE SELO, MITOCHONDRIAL"/>
    <property type="match status" value="1"/>
</dbReference>
<dbReference type="Pfam" id="PF02696">
    <property type="entry name" value="SelO"/>
    <property type="match status" value="1"/>
</dbReference>
<evidence type="ECO:0000255" key="1">
    <source>
        <dbReference type="HAMAP-Rule" id="MF_00692"/>
    </source>
</evidence>
<organism>
    <name type="scientific">Burkholderia ambifaria (strain MC40-6)</name>
    <dbReference type="NCBI Taxonomy" id="398577"/>
    <lineage>
        <taxon>Bacteria</taxon>
        <taxon>Pseudomonadati</taxon>
        <taxon>Pseudomonadota</taxon>
        <taxon>Betaproteobacteria</taxon>
        <taxon>Burkholderiales</taxon>
        <taxon>Burkholderiaceae</taxon>
        <taxon>Burkholderia</taxon>
        <taxon>Burkholderia cepacia complex</taxon>
    </lineage>
</organism>
<comment type="function">
    <text evidence="1">Nucleotidyltransferase involved in the post-translational modification of proteins. It can catalyze the addition of adenosine monophosphate (AMP) or uridine monophosphate (UMP) to a protein, resulting in modifications known as AMPylation and UMPylation.</text>
</comment>
<comment type="catalytic activity">
    <reaction evidence="1">
        <text>L-seryl-[protein] + ATP = 3-O-(5'-adenylyl)-L-seryl-[protein] + diphosphate</text>
        <dbReference type="Rhea" id="RHEA:58120"/>
        <dbReference type="Rhea" id="RHEA-COMP:9863"/>
        <dbReference type="Rhea" id="RHEA-COMP:15073"/>
        <dbReference type="ChEBI" id="CHEBI:29999"/>
        <dbReference type="ChEBI" id="CHEBI:30616"/>
        <dbReference type="ChEBI" id="CHEBI:33019"/>
        <dbReference type="ChEBI" id="CHEBI:142516"/>
        <dbReference type="EC" id="2.7.7.108"/>
    </reaction>
</comment>
<comment type="catalytic activity">
    <reaction evidence="1">
        <text>L-threonyl-[protein] + ATP = 3-O-(5'-adenylyl)-L-threonyl-[protein] + diphosphate</text>
        <dbReference type="Rhea" id="RHEA:54292"/>
        <dbReference type="Rhea" id="RHEA-COMP:11060"/>
        <dbReference type="Rhea" id="RHEA-COMP:13847"/>
        <dbReference type="ChEBI" id="CHEBI:30013"/>
        <dbReference type="ChEBI" id="CHEBI:30616"/>
        <dbReference type="ChEBI" id="CHEBI:33019"/>
        <dbReference type="ChEBI" id="CHEBI:138113"/>
        <dbReference type="EC" id="2.7.7.108"/>
    </reaction>
</comment>
<comment type="catalytic activity">
    <reaction evidence="1">
        <text>L-tyrosyl-[protein] + ATP = O-(5'-adenylyl)-L-tyrosyl-[protein] + diphosphate</text>
        <dbReference type="Rhea" id="RHEA:54288"/>
        <dbReference type="Rhea" id="RHEA-COMP:10136"/>
        <dbReference type="Rhea" id="RHEA-COMP:13846"/>
        <dbReference type="ChEBI" id="CHEBI:30616"/>
        <dbReference type="ChEBI" id="CHEBI:33019"/>
        <dbReference type="ChEBI" id="CHEBI:46858"/>
        <dbReference type="ChEBI" id="CHEBI:83624"/>
        <dbReference type="EC" id="2.7.7.108"/>
    </reaction>
</comment>
<comment type="catalytic activity">
    <reaction evidence="1">
        <text>L-histidyl-[protein] + UTP = N(tele)-(5'-uridylyl)-L-histidyl-[protein] + diphosphate</text>
        <dbReference type="Rhea" id="RHEA:83891"/>
        <dbReference type="Rhea" id="RHEA-COMP:9745"/>
        <dbReference type="Rhea" id="RHEA-COMP:20239"/>
        <dbReference type="ChEBI" id="CHEBI:29979"/>
        <dbReference type="ChEBI" id="CHEBI:33019"/>
        <dbReference type="ChEBI" id="CHEBI:46398"/>
        <dbReference type="ChEBI" id="CHEBI:233474"/>
    </reaction>
</comment>
<comment type="catalytic activity">
    <reaction evidence="1">
        <text>L-seryl-[protein] + UTP = O-(5'-uridylyl)-L-seryl-[protein] + diphosphate</text>
        <dbReference type="Rhea" id="RHEA:64604"/>
        <dbReference type="Rhea" id="RHEA-COMP:9863"/>
        <dbReference type="Rhea" id="RHEA-COMP:16635"/>
        <dbReference type="ChEBI" id="CHEBI:29999"/>
        <dbReference type="ChEBI" id="CHEBI:33019"/>
        <dbReference type="ChEBI" id="CHEBI:46398"/>
        <dbReference type="ChEBI" id="CHEBI:156051"/>
    </reaction>
</comment>
<comment type="catalytic activity">
    <reaction evidence="1">
        <text>L-tyrosyl-[protein] + UTP = O-(5'-uridylyl)-L-tyrosyl-[protein] + diphosphate</text>
        <dbReference type="Rhea" id="RHEA:83887"/>
        <dbReference type="Rhea" id="RHEA-COMP:10136"/>
        <dbReference type="Rhea" id="RHEA-COMP:20238"/>
        <dbReference type="ChEBI" id="CHEBI:33019"/>
        <dbReference type="ChEBI" id="CHEBI:46398"/>
        <dbReference type="ChEBI" id="CHEBI:46858"/>
        <dbReference type="ChEBI" id="CHEBI:90602"/>
    </reaction>
</comment>
<comment type="cofactor">
    <cofactor evidence="1">
        <name>Mg(2+)</name>
        <dbReference type="ChEBI" id="CHEBI:18420"/>
    </cofactor>
    <cofactor evidence="1">
        <name>Mn(2+)</name>
        <dbReference type="ChEBI" id="CHEBI:29035"/>
    </cofactor>
</comment>
<comment type="similarity">
    <text evidence="1">Belongs to the SELO family.</text>
</comment>
<gene>
    <name evidence="1" type="primary">ydiU</name>
    <name evidence="1" type="synonym">selO</name>
    <name type="ordered locus">BamMC406_1826</name>
</gene>
<accession>B1YRN5</accession>
<proteinExistence type="inferred from homology"/>